<sequence>MKRTYQPKKQRRNRTHGFLKRSKTPGGRNVLKSRRAKGRKRLTTRAPKK</sequence>
<organism>
    <name type="scientific">Anaeromyxobacter dehalogenans (strain 2CP-1 / ATCC BAA-258)</name>
    <dbReference type="NCBI Taxonomy" id="455488"/>
    <lineage>
        <taxon>Bacteria</taxon>
        <taxon>Pseudomonadati</taxon>
        <taxon>Myxococcota</taxon>
        <taxon>Myxococcia</taxon>
        <taxon>Myxococcales</taxon>
        <taxon>Cystobacterineae</taxon>
        <taxon>Anaeromyxobacteraceae</taxon>
        <taxon>Anaeromyxobacter</taxon>
    </lineage>
</organism>
<evidence type="ECO:0000255" key="1">
    <source>
        <dbReference type="HAMAP-Rule" id="MF_00391"/>
    </source>
</evidence>
<evidence type="ECO:0000256" key="2">
    <source>
        <dbReference type="SAM" id="MobiDB-lite"/>
    </source>
</evidence>
<evidence type="ECO:0000305" key="3"/>
<gene>
    <name evidence="1" type="primary">rpmH</name>
    <name type="ordered locus">A2cp1_4517</name>
</gene>
<keyword id="KW-0687">Ribonucleoprotein</keyword>
<keyword id="KW-0689">Ribosomal protein</keyword>
<dbReference type="EMBL" id="CP001359">
    <property type="protein sequence ID" value="ACL67834.1"/>
    <property type="molecule type" value="Genomic_DNA"/>
</dbReference>
<dbReference type="SMR" id="B8JDK8"/>
<dbReference type="KEGG" id="acp:A2cp1_4517"/>
<dbReference type="HOGENOM" id="CLU_129938_2_0_7"/>
<dbReference type="Proteomes" id="UP000007089">
    <property type="component" value="Chromosome"/>
</dbReference>
<dbReference type="GO" id="GO:1990904">
    <property type="term" value="C:ribonucleoprotein complex"/>
    <property type="evidence" value="ECO:0007669"/>
    <property type="project" value="UniProtKB-KW"/>
</dbReference>
<dbReference type="GO" id="GO:0005840">
    <property type="term" value="C:ribosome"/>
    <property type="evidence" value="ECO:0007669"/>
    <property type="project" value="UniProtKB-KW"/>
</dbReference>
<dbReference type="GO" id="GO:0003735">
    <property type="term" value="F:structural constituent of ribosome"/>
    <property type="evidence" value="ECO:0007669"/>
    <property type="project" value="InterPro"/>
</dbReference>
<dbReference type="GO" id="GO:0006412">
    <property type="term" value="P:translation"/>
    <property type="evidence" value="ECO:0007669"/>
    <property type="project" value="UniProtKB-UniRule"/>
</dbReference>
<dbReference type="FunFam" id="1.10.287.3980:FF:000001">
    <property type="entry name" value="Mitochondrial ribosomal protein L34"/>
    <property type="match status" value="1"/>
</dbReference>
<dbReference type="Gene3D" id="1.10.287.3980">
    <property type="match status" value="1"/>
</dbReference>
<dbReference type="HAMAP" id="MF_00391">
    <property type="entry name" value="Ribosomal_bL34"/>
    <property type="match status" value="1"/>
</dbReference>
<dbReference type="InterPro" id="IPR000271">
    <property type="entry name" value="Ribosomal_bL34"/>
</dbReference>
<dbReference type="InterPro" id="IPR020939">
    <property type="entry name" value="Ribosomal_bL34_CS"/>
</dbReference>
<dbReference type="NCBIfam" id="TIGR01030">
    <property type="entry name" value="rpmH_bact"/>
    <property type="match status" value="1"/>
</dbReference>
<dbReference type="PANTHER" id="PTHR14503:SF4">
    <property type="entry name" value="LARGE RIBOSOMAL SUBUNIT PROTEIN BL34M"/>
    <property type="match status" value="1"/>
</dbReference>
<dbReference type="PANTHER" id="PTHR14503">
    <property type="entry name" value="MITOCHONDRIAL RIBOSOMAL PROTEIN 34 FAMILY MEMBER"/>
    <property type="match status" value="1"/>
</dbReference>
<dbReference type="Pfam" id="PF00468">
    <property type="entry name" value="Ribosomal_L34"/>
    <property type="match status" value="1"/>
</dbReference>
<dbReference type="PROSITE" id="PS00784">
    <property type="entry name" value="RIBOSOMAL_L34"/>
    <property type="match status" value="1"/>
</dbReference>
<feature type="chain" id="PRO_1000196005" description="Large ribosomal subunit protein bL34">
    <location>
        <begin position="1"/>
        <end position="49"/>
    </location>
</feature>
<feature type="region of interest" description="Disordered" evidence="2">
    <location>
        <begin position="1"/>
        <end position="49"/>
    </location>
</feature>
<feature type="compositionally biased region" description="Basic residues" evidence="2">
    <location>
        <begin position="1"/>
        <end position="23"/>
    </location>
</feature>
<feature type="compositionally biased region" description="Basic residues" evidence="2">
    <location>
        <begin position="31"/>
        <end position="49"/>
    </location>
</feature>
<protein>
    <recommendedName>
        <fullName evidence="1">Large ribosomal subunit protein bL34</fullName>
    </recommendedName>
    <alternativeName>
        <fullName evidence="3">50S ribosomal protein L34</fullName>
    </alternativeName>
</protein>
<comment type="similarity">
    <text evidence="1">Belongs to the bacterial ribosomal protein bL34 family.</text>
</comment>
<reference key="1">
    <citation type="submission" date="2009-01" db="EMBL/GenBank/DDBJ databases">
        <title>Complete sequence of Anaeromyxobacter dehalogenans 2CP-1.</title>
        <authorList>
            <person name="Lucas S."/>
            <person name="Copeland A."/>
            <person name="Lapidus A."/>
            <person name="Glavina del Rio T."/>
            <person name="Dalin E."/>
            <person name="Tice H."/>
            <person name="Bruce D."/>
            <person name="Goodwin L."/>
            <person name="Pitluck S."/>
            <person name="Saunders E."/>
            <person name="Brettin T."/>
            <person name="Detter J.C."/>
            <person name="Han C."/>
            <person name="Larimer F."/>
            <person name="Land M."/>
            <person name="Hauser L."/>
            <person name="Kyrpides N."/>
            <person name="Ovchinnikova G."/>
            <person name="Beliaev A.S."/>
            <person name="Richardson P."/>
        </authorList>
    </citation>
    <scope>NUCLEOTIDE SEQUENCE [LARGE SCALE GENOMIC DNA]</scope>
    <source>
        <strain>2CP-1 / ATCC BAA-258</strain>
    </source>
</reference>
<name>RL34_ANAD2</name>
<proteinExistence type="inferred from homology"/>
<accession>B8JDK8</accession>